<dbReference type="EMBL" id="D50601">
    <property type="protein sequence ID" value="BAA09143.1"/>
    <property type="molecule type" value="Genomic_DNA"/>
</dbReference>
<dbReference type="RefSeq" id="WP_000389732.1">
    <property type="nucleotide sequence ID" value="NZ_WHSK01000208.1"/>
</dbReference>
<dbReference type="SMR" id="P68879"/>
<dbReference type="STRING" id="216599.GCA_000283715_05225"/>
<dbReference type="OMA" id="DDEIQVY"/>
<dbReference type="GO" id="GO:0005737">
    <property type="term" value="C:cytoplasm"/>
    <property type="evidence" value="ECO:0007669"/>
    <property type="project" value="UniProtKB-SubCell"/>
</dbReference>
<dbReference type="CDD" id="cd17022">
    <property type="entry name" value="T3SC_IA_SigE-like"/>
    <property type="match status" value="1"/>
</dbReference>
<dbReference type="Gene3D" id="3.30.1460.10">
    <property type="match status" value="1"/>
</dbReference>
<dbReference type="InterPro" id="IPR013095">
    <property type="entry name" value="T3SS_chaperone"/>
</dbReference>
<dbReference type="NCBIfam" id="NF011749">
    <property type="entry name" value="PRK15202.1"/>
    <property type="match status" value="1"/>
</dbReference>
<dbReference type="Pfam" id="PF07824">
    <property type="entry name" value="Chaperone_III"/>
    <property type="match status" value="1"/>
</dbReference>
<dbReference type="PIRSF" id="PIRSF034754">
    <property type="entry name" value="T3SS_chaperone"/>
    <property type="match status" value="1"/>
</dbReference>
<dbReference type="SUPFAM" id="SSF69635">
    <property type="entry name" value="Type III secretory system chaperone-like"/>
    <property type="match status" value="1"/>
</dbReference>
<keyword id="KW-0143">Chaperone</keyword>
<keyword id="KW-0963">Cytoplasm</keyword>
<keyword id="KW-0614">Plasmid</keyword>
<keyword id="KW-0843">Virulence</keyword>
<comment type="function">
    <text evidence="1">Molecular chaperone required for IpgD stabilization and secretion.</text>
</comment>
<comment type="subcellular location">
    <subcellularLocation>
        <location evidence="1">Cytoplasm</location>
    </subcellularLocation>
</comment>
<comment type="similarity">
    <text evidence="2">Belongs to the IpgE/SigE chaperone family.</text>
</comment>
<feature type="chain" id="PRO_0000160571" description="Chaperone protein IpgE">
    <location>
        <begin position="1"/>
        <end position="120"/>
    </location>
</feature>
<accession>P68879</accession>
<accession>Q07567</accession>
<organism>
    <name type="scientific">Shigella sonnei</name>
    <dbReference type="NCBI Taxonomy" id="624"/>
    <lineage>
        <taxon>Bacteria</taxon>
        <taxon>Pseudomonadati</taxon>
        <taxon>Pseudomonadota</taxon>
        <taxon>Gammaproteobacteria</taxon>
        <taxon>Enterobacterales</taxon>
        <taxon>Enterobacteriaceae</taxon>
        <taxon>Shigella</taxon>
    </lineage>
</organism>
<name>IPGE_SHISO</name>
<gene>
    <name type="primary">ipgE</name>
</gene>
<protein>
    <recommendedName>
        <fullName>Chaperone protein IpgE</fullName>
    </recommendedName>
</protein>
<proteinExistence type="inferred from homology"/>
<reference key="1">
    <citation type="submission" date="1995-05" db="EMBL/GenBank/DDBJ databases">
        <title>Comparison and high conservation of nucleotide sequences of spa-mxi regions between S.sonnei and S.flexneri -- identification of a new gene coding plausible membrane protein.</title>
        <authorList>
            <person name="Arakawa E."/>
            <person name="Kato J."/>
            <person name="Ito K."/>
            <person name="Watanabe H."/>
        </authorList>
    </citation>
    <scope>NUCLEOTIDE SEQUENCE [GENOMIC DNA]</scope>
    <source>
        <strain>HW383</strain>
    </source>
</reference>
<geneLocation type="plasmid">
    <name>pINV</name>
</geneLocation>
<sequence>MEDLADVICRALGIPLIDIDDQAIMLDDDVLIYIEKEGDSINLLCPFCALPENINDLIYALSLNYSEKICLATDDEGGNLIARLDLTGINEFEDVYVNTEYYISRVRWLKDEFARRMKGY</sequence>
<evidence type="ECO:0000250" key="1"/>
<evidence type="ECO:0000305" key="2"/>